<evidence type="ECO:0000255" key="1">
    <source>
        <dbReference type="PROSITE-ProRule" id="PRU01346"/>
    </source>
</evidence>
<evidence type="ECO:0000305" key="2"/>
<evidence type="ECO:0007829" key="3">
    <source>
        <dbReference type="PDB" id="1I4K"/>
    </source>
</evidence>
<proteinExistence type="evidence at protein level"/>
<organism>
    <name type="scientific">Archaeoglobus fulgidus (strain ATCC 49558 / DSM 4304 / JCM 9628 / NBRC 100126 / VC-16)</name>
    <dbReference type="NCBI Taxonomy" id="224325"/>
    <lineage>
        <taxon>Archaea</taxon>
        <taxon>Methanobacteriati</taxon>
        <taxon>Methanobacteriota</taxon>
        <taxon>Archaeoglobi</taxon>
        <taxon>Archaeoglobales</taxon>
        <taxon>Archaeoglobaceae</taxon>
        <taxon>Archaeoglobus</taxon>
    </lineage>
</organism>
<feature type="chain" id="PRO_0000125592" description="Putative snRNP Sm-like protein">
    <location>
        <begin position="1"/>
        <end position="77"/>
    </location>
</feature>
<feature type="domain" description="Sm" evidence="1">
    <location>
        <begin position="4"/>
        <end position="76"/>
    </location>
</feature>
<feature type="helix" evidence="3">
    <location>
        <begin position="5"/>
        <end position="10"/>
    </location>
</feature>
<feature type="turn" evidence="3">
    <location>
        <begin position="11"/>
        <end position="14"/>
    </location>
</feature>
<feature type="strand" evidence="3">
    <location>
        <begin position="15"/>
        <end position="21"/>
    </location>
</feature>
<feature type="strand" evidence="3">
    <location>
        <begin position="26"/>
        <end position="34"/>
    </location>
</feature>
<feature type="strand" evidence="3">
    <location>
        <begin position="40"/>
        <end position="49"/>
    </location>
</feature>
<feature type="strand" evidence="3">
    <location>
        <begin position="52"/>
        <end position="62"/>
    </location>
</feature>
<feature type="helix" evidence="3">
    <location>
        <begin position="64"/>
        <end position="66"/>
    </location>
</feature>
<feature type="strand" evidence="3">
    <location>
        <begin position="67"/>
        <end position="72"/>
    </location>
</feature>
<gene>
    <name type="ordered locus">AF_0875</name>
</gene>
<protein>
    <recommendedName>
        <fullName>Putative snRNP Sm-like protein</fullName>
    </recommendedName>
</protein>
<comment type="similarity">
    <text evidence="2">Belongs to the snRNP Sm proteins family.</text>
</comment>
<keyword id="KW-0002">3D-structure</keyword>
<keyword id="KW-1185">Reference proteome</keyword>
<keyword id="KW-0687">Ribonucleoprotein</keyword>
<reference key="1">
    <citation type="journal article" date="1997" name="Nature">
        <title>The complete genome sequence of the hyperthermophilic, sulphate-reducing archaeon Archaeoglobus fulgidus.</title>
        <authorList>
            <person name="Klenk H.-P."/>
            <person name="Clayton R.A."/>
            <person name="Tomb J.-F."/>
            <person name="White O."/>
            <person name="Nelson K.E."/>
            <person name="Ketchum K.A."/>
            <person name="Dodson R.J."/>
            <person name="Gwinn M.L."/>
            <person name="Hickey E.K."/>
            <person name="Peterson J.D."/>
            <person name="Richardson D.L."/>
            <person name="Kerlavage A.R."/>
            <person name="Graham D.E."/>
            <person name="Kyrpides N.C."/>
            <person name="Fleischmann R.D."/>
            <person name="Quackenbush J."/>
            <person name="Lee N.H."/>
            <person name="Sutton G.G."/>
            <person name="Gill S.R."/>
            <person name="Kirkness E.F."/>
            <person name="Dougherty B.A."/>
            <person name="McKenney K."/>
            <person name="Adams M.D."/>
            <person name="Loftus B.J."/>
            <person name="Peterson S.N."/>
            <person name="Reich C.I."/>
            <person name="McNeil L.K."/>
            <person name="Badger J.H."/>
            <person name="Glodek A."/>
            <person name="Zhou L."/>
            <person name="Overbeek R."/>
            <person name="Gocayne J.D."/>
            <person name="Weidman J.F."/>
            <person name="McDonald L.A."/>
            <person name="Utterback T.R."/>
            <person name="Cotton M.D."/>
            <person name="Spriggs T."/>
            <person name="Artiach P."/>
            <person name="Kaine B.P."/>
            <person name="Sykes S.M."/>
            <person name="Sadow P.W."/>
            <person name="D'Andrea K.P."/>
            <person name="Bowman C."/>
            <person name="Fujii C."/>
            <person name="Garland S.A."/>
            <person name="Mason T.M."/>
            <person name="Olsen G.J."/>
            <person name="Fraser C.M."/>
            <person name="Smith H.O."/>
            <person name="Woese C.R."/>
            <person name="Venter J.C."/>
        </authorList>
    </citation>
    <scope>NUCLEOTIDE SEQUENCE [LARGE SCALE GENOMIC DNA]</scope>
    <source>
        <strain>ATCC 49558 / DSM 4304 / JCM 9628 / NBRC 100126 / VC-16</strain>
    </source>
</reference>
<name>RUXX_ARCFU</name>
<accession>O29386</accession>
<sequence>MPPRPLDVLNRSLKSPVIVRLKGGREFRGTLDGYDIHMNLVLLDAEEIQNGEVVRKVGSVVIRGDTVVFVSPAPGGE</sequence>
<dbReference type="EMBL" id="AE000782">
    <property type="protein sequence ID" value="AAB90374.1"/>
    <property type="molecule type" value="Genomic_DNA"/>
</dbReference>
<dbReference type="PIR" id="C69359">
    <property type="entry name" value="C69359"/>
</dbReference>
<dbReference type="RefSeq" id="WP_010878376.1">
    <property type="nucleotide sequence ID" value="NC_000917.1"/>
</dbReference>
<dbReference type="PDB" id="1I4K">
    <property type="method" value="X-ray"/>
    <property type="resolution" value="2.50 A"/>
    <property type="chains" value="1/2/A/B/C/D/E/F/G/H/I/J/K/L/M/N/O/P/Q/R/S/T/U/V/W/X/Y/Z=1-77"/>
</dbReference>
<dbReference type="PDB" id="1I5L">
    <property type="method" value="X-ray"/>
    <property type="resolution" value="2.75 A"/>
    <property type="chains" value="A/B/C/D/E/F/G/H/I/J/K/L/M/N=1-77"/>
</dbReference>
<dbReference type="PDBsum" id="1I4K"/>
<dbReference type="PDBsum" id="1I5L"/>
<dbReference type="SMR" id="O29386"/>
<dbReference type="STRING" id="224325.AF_0875"/>
<dbReference type="PaxDb" id="224325-AF_0875"/>
<dbReference type="EnsemblBacteria" id="AAB90374">
    <property type="protein sequence ID" value="AAB90374"/>
    <property type="gene ID" value="AF_0875"/>
</dbReference>
<dbReference type="KEGG" id="afu:AF_0875"/>
<dbReference type="eggNOG" id="arCOG00998">
    <property type="taxonomic scope" value="Archaea"/>
</dbReference>
<dbReference type="HOGENOM" id="CLU_076902_11_1_2"/>
<dbReference type="OrthoDB" id="371816at2157"/>
<dbReference type="PhylomeDB" id="O29386"/>
<dbReference type="EvolutionaryTrace" id="O29386"/>
<dbReference type="Proteomes" id="UP000002199">
    <property type="component" value="Chromosome"/>
</dbReference>
<dbReference type="GO" id="GO:1990904">
    <property type="term" value="C:ribonucleoprotein complex"/>
    <property type="evidence" value="ECO:0007669"/>
    <property type="project" value="UniProtKB-KW"/>
</dbReference>
<dbReference type="GO" id="GO:0003723">
    <property type="term" value="F:RNA binding"/>
    <property type="evidence" value="ECO:0007669"/>
    <property type="project" value="InterPro"/>
</dbReference>
<dbReference type="CDD" id="cd01731">
    <property type="entry name" value="archaeal_Sm1"/>
    <property type="match status" value="1"/>
</dbReference>
<dbReference type="Gene3D" id="2.30.30.100">
    <property type="match status" value="1"/>
</dbReference>
<dbReference type="HAMAP" id="MF_00257">
    <property type="entry name" value="Lsm_RuxX"/>
    <property type="match status" value="1"/>
</dbReference>
<dbReference type="InterPro" id="IPR044641">
    <property type="entry name" value="Lsm7/SmG-like"/>
</dbReference>
<dbReference type="InterPro" id="IPR010920">
    <property type="entry name" value="LSM_dom_sf"/>
</dbReference>
<dbReference type="InterPro" id="IPR047575">
    <property type="entry name" value="Sm"/>
</dbReference>
<dbReference type="InterPro" id="IPR001163">
    <property type="entry name" value="Sm_dom_euk/arc"/>
</dbReference>
<dbReference type="InterPro" id="IPR022901">
    <property type="entry name" value="snRNP_Sm-like_arc"/>
</dbReference>
<dbReference type="NCBIfam" id="NF001963">
    <property type="entry name" value="PRK00737.1"/>
    <property type="match status" value="1"/>
</dbReference>
<dbReference type="PANTHER" id="PTHR10553">
    <property type="entry name" value="SMALL NUCLEAR RIBONUCLEOPROTEIN"/>
    <property type="match status" value="1"/>
</dbReference>
<dbReference type="PANTHER" id="PTHR10553:SF5">
    <property type="entry name" value="U6 SNRNA-ASSOCIATED SM-LIKE PROTEIN LSM7"/>
    <property type="match status" value="1"/>
</dbReference>
<dbReference type="Pfam" id="PF01423">
    <property type="entry name" value="LSM"/>
    <property type="match status" value="1"/>
</dbReference>
<dbReference type="SMART" id="SM00651">
    <property type="entry name" value="Sm"/>
    <property type="match status" value="1"/>
</dbReference>
<dbReference type="SUPFAM" id="SSF50182">
    <property type="entry name" value="Sm-like ribonucleoproteins"/>
    <property type="match status" value="1"/>
</dbReference>
<dbReference type="PROSITE" id="PS52002">
    <property type="entry name" value="SM"/>
    <property type="match status" value="1"/>
</dbReference>